<evidence type="ECO:0000250" key="1">
    <source>
        <dbReference type="UniProtKB" id="P24610"/>
    </source>
</evidence>
<evidence type="ECO:0000255" key="2">
    <source>
        <dbReference type="PROSITE-ProRule" id="PRU00108"/>
    </source>
</evidence>
<evidence type="ECO:0000255" key="3">
    <source>
        <dbReference type="PROSITE-ProRule" id="PRU00381"/>
    </source>
</evidence>
<evidence type="ECO:0000256" key="4">
    <source>
        <dbReference type="SAM" id="MobiDB-lite"/>
    </source>
</evidence>
<evidence type="ECO:0000269" key="5">
    <source>
    </source>
</evidence>
<evidence type="ECO:0000269" key="6">
    <source>
    </source>
</evidence>
<evidence type="ECO:0000269" key="7">
    <source>
    </source>
</evidence>
<evidence type="ECO:0000269" key="8">
    <source>
    </source>
</evidence>
<evidence type="ECO:0000269" key="9">
    <source>
    </source>
</evidence>
<evidence type="ECO:0000269" key="10">
    <source>
    </source>
</evidence>
<evidence type="ECO:0000269" key="11">
    <source>
    </source>
</evidence>
<evidence type="ECO:0000269" key="12">
    <source>
    </source>
</evidence>
<evidence type="ECO:0000269" key="13">
    <source>
    </source>
</evidence>
<evidence type="ECO:0000269" key="14">
    <source>
    </source>
</evidence>
<evidence type="ECO:0000269" key="15">
    <source>
    </source>
</evidence>
<evidence type="ECO:0000269" key="16">
    <source>
    </source>
</evidence>
<evidence type="ECO:0000269" key="17">
    <source>
    </source>
</evidence>
<evidence type="ECO:0000269" key="18">
    <source>
    </source>
</evidence>
<evidence type="ECO:0000269" key="19">
    <source>
    </source>
</evidence>
<evidence type="ECO:0000269" key="20">
    <source>
    </source>
</evidence>
<evidence type="ECO:0000269" key="21">
    <source>
    </source>
</evidence>
<evidence type="ECO:0000269" key="22">
    <source>
    </source>
</evidence>
<evidence type="ECO:0000269" key="23">
    <source>
    </source>
</evidence>
<evidence type="ECO:0000269" key="24">
    <source>
    </source>
</evidence>
<evidence type="ECO:0000269" key="25">
    <source>
    </source>
</evidence>
<evidence type="ECO:0000269" key="26">
    <source>
    </source>
</evidence>
<evidence type="ECO:0000269" key="27">
    <source>
    </source>
</evidence>
<evidence type="ECO:0000269" key="28">
    <source>
    </source>
</evidence>
<evidence type="ECO:0000269" key="29">
    <source>
    </source>
</evidence>
<evidence type="ECO:0000269" key="30">
    <source>
    </source>
</evidence>
<evidence type="ECO:0000269" key="31">
    <source>
    </source>
</evidence>
<evidence type="ECO:0000269" key="32">
    <source>
    </source>
</evidence>
<evidence type="ECO:0000269" key="33">
    <source>
    </source>
</evidence>
<evidence type="ECO:0000269" key="34">
    <source ref="35"/>
</evidence>
<evidence type="ECO:0000269" key="35">
    <source ref="36"/>
</evidence>
<evidence type="ECO:0000303" key="36">
    <source>
    </source>
</evidence>
<evidence type="ECO:0000303" key="37">
    <source>
    </source>
</evidence>
<evidence type="ECO:0000303" key="38">
    <source>
    </source>
</evidence>
<evidence type="ECO:0000303" key="39">
    <source>
    </source>
</evidence>
<evidence type="ECO:0000305" key="40"/>
<evidence type="ECO:0007829" key="41">
    <source>
        <dbReference type="PDB" id="3CMY"/>
    </source>
</evidence>
<protein>
    <recommendedName>
        <fullName>Paired box protein Pax-3</fullName>
    </recommendedName>
    <alternativeName>
        <fullName>HuP2</fullName>
    </alternativeName>
</protein>
<keyword id="KW-0002">3D-structure</keyword>
<keyword id="KW-0025">Alternative splicing</keyword>
<keyword id="KW-0160">Chromosomal rearrangement</keyword>
<keyword id="KW-0209">Deafness</keyword>
<keyword id="KW-0217">Developmental protein</keyword>
<keyword id="KW-0225">Disease variant</keyword>
<keyword id="KW-0238">DNA-binding</keyword>
<keyword id="KW-0371">Homeobox</keyword>
<keyword id="KW-0517">Myogenesis</keyword>
<keyword id="KW-0524">Neurogenesis</keyword>
<keyword id="KW-0539">Nucleus</keyword>
<keyword id="KW-0563">Paired box</keyword>
<keyword id="KW-0597">Phosphoprotein</keyword>
<keyword id="KW-1267">Proteomics identification</keyword>
<keyword id="KW-0656">Proto-oncogene</keyword>
<keyword id="KW-1185">Reference proteome</keyword>
<keyword id="KW-0804">Transcription</keyword>
<keyword id="KW-0805">Transcription regulation</keyword>
<keyword id="KW-0897">Waardenburg syndrome</keyword>
<sequence length="479" mass="52968">MTTLAGAVPRMMRPGPGQNYPRSGFPLEVSTPLGQGRVNQLGGVFINGRPLPNHIRHKIVEMAHHGIRPCVISRQLRVSHGCVSKILCRYQETGSIRPGAIGGSKPKQVTTPDVEKKIEEYKRENPGMFSWEIRDKLLKDAVCDRNTVPSVSSISRILRSKFGKGEEEEADLERKEAEESEKKAKHSIDGILSERASAPQSDEGSDIDSEPDLPLKRKQRRSRTTFTAEQLEELERAFERTHYPDIYTREELAQRAKLTEARVQVWFSNRRARWRKQAGANQLMAFNHLIPGGFPPTAMPTLPTYQLSETSYQPTSIPQAVSDPSSTVHRPQPLPPSTVHQSTIPSNPDSSSAYCLPSTRHGFSSYTDSFVPPSGPSNPMNPTIGNGLSPQVMGLLTNHGGVPHQPQTDYALSPLTGGLEPTTTVSASCSQRLDHMKSLDSLPTSQSYCPPTYSTTGYSMDPVTGYQYGQYGQSKPWTF</sequence>
<dbReference type="EMBL" id="AY251279">
    <property type="protein sequence ID" value="AAP13872.1"/>
    <property type="molecule type" value="mRNA"/>
</dbReference>
<dbReference type="EMBL" id="AY251280">
    <property type="protein sequence ID" value="AAP13873.1"/>
    <property type="molecule type" value="mRNA"/>
</dbReference>
<dbReference type="EMBL" id="AK291278">
    <property type="protein sequence ID" value="BAF83967.1"/>
    <property type="molecule type" value="mRNA"/>
</dbReference>
<dbReference type="EMBL" id="AC010980">
    <property type="protein sequence ID" value="AAY14900.1"/>
    <property type="molecule type" value="Genomic_DNA"/>
</dbReference>
<dbReference type="EMBL" id="AC012591">
    <property type="status" value="NOT_ANNOTATED_CDS"/>
    <property type="molecule type" value="Genomic_DNA"/>
</dbReference>
<dbReference type="EMBL" id="CH471063">
    <property type="protein sequence ID" value="EAW70789.1"/>
    <property type="molecule type" value="Genomic_DNA"/>
</dbReference>
<dbReference type="EMBL" id="CH471063">
    <property type="protein sequence ID" value="EAW70791.1"/>
    <property type="molecule type" value="Genomic_DNA"/>
</dbReference>
<dbReference type="EMBL" id="CH471063">
    <property type="protein sequence ID" value="EAW70794.1"/>
    <property type="molecule type" value="Genomic_DNA"/>
</dbReference>
<dbReference type="EMBL" id="CH471063">
    <property type="protein sequence ID" value="EAW70796.1"/>
    <property type="molecule type" value="Genomic_DNA"/>
</dbReference>
<dbReference type="EMBL" id="BC063547">
    <property type="protein sequence ID" value="AAH63547.1"/>
    <property type="molecule type" value="mRNA"/>
</dbReference>
<dbReference type="EMBL" id="BC101299">
    <property type="protein sequence ID" value="AAI01300.1"/>
    <property type="molecule type" value="mRNA"/>
</dbReference>
<dbReference type="EMBL" id="BC101300">
    <property type="protein sequence ID" value="AAI01301.1"/>
    <property type="molecule type" value="mRNA"/>
</dbReference>
<dbReference type="EMBL" id="BC101301">
    <property type="protein sequence ID" value="AAI01302.1"/>
    <property type="molecule type" value="mRNA"/>
</dbReference>
<dbReference type="EMBL" id="BC101302">
    <property type="protein sequence ID" value="AAI01303.1"/>
    <property type="molecule type" value="mRNA"/>
</dbReference>
<dbReference type="EMBL" id="BC114363">
    <property type="protein sequence ID" value="AAI14364.1"/>
    <property type="molecule type" value="mRNA"/>
</dbReference>
<dbReference type="EMBL" id="U12263">
    <property type="protein sequence ID" value="AAA80573.1"/>
    <property type="molecule type" value="Genomic_DNA"/>
</dbReference>
<dbReference type="EMBL" id="U12259">
    <property type="protein sequence ID" value="AAA80574.1"/>
    <property type="molecule type" value="Genomic_DNA"/>
</dbReference>
<dbReference type="EMBL" id="U12258">
    <property type="protein sequence ID" value="AAA80574.1"/>
    <property type="status" value="JOINED"/>
    <property type="molecule type" value="Genomic_DNA"/>
</dbReference>
<dbReference type="EMBL" id="U12260">
    <property type="protein sequence ID" value="AAA80574.1"/>
    <property type="status" value="JOINED"/>
    <property type="molecule type" value="Genomic_DNA"/>
</dbReference>
<dbReference type="EMBL" id="U12262">
    <property type="protein sequence ID" value="AAA80574.1"/>
    <property type="status" value="JOINED"/>
    <property type="molecule type" value="Genomic_DNA"/>
</dbReference>
<dbReference type="EMBL" id="X15043">
    <property type="protein sequence ID" value="CAA33145.1"/>
    <property type="molecule type" value="Genomic_DNA"/>
</dbReference>
<dbReference type="EMBL" id="X15252">
    <property type="protein sequence ID" value="CAA33145.1"/>
    <property type="status" value="JOINED"/>
    <property type="molecule type" value="Genomic_DNA"/>
</dbReference>
<dbReference type="EMBL" id="X15253">
    <property type="protein sequence ID" value="CAA33145.1"/>
    <property type="status" value="JOINED"/>
    <property type="molecule type" value="Genomic_DNA"/>
</dbReference>
<dbReference type="EMBL" id="Z29972">
    <property type="status" value="NOT_ANNOTATED_CDS"/>
    <property type="molecule type" value="Genomic_DNA"/>
</dbReference>
<dbReference type="EMBL" id="Z29973">
    <property type="status" value="NOT_ANNOTATED_CDS"/>
    <property type="molecule type" value="Genomic_DNA"/>
</dbReference>
<dbReference type="EMBL" id="Z29974">
    <property type="status" value="NOT_ANNOTATED_CDS"/>
    <property type="molecule type" value="Genomic_DNA"/>
</dbReference>
<dbReference type="EMBL" id="S69369">
    <property type="protein sequence ID" value="AAB30167.1"/>
    <property type="molecule type" value="mRNA"/>
</dbReference>
<dbReference type="EMBL" id="S69370">
    <property type="protein sequence ID" value="AAB30168.1"/>
    <property type="molecule type" value="mRNA"/>
</dbReference>
<dbReference type="EMBL" id="AY633656">
    <property type="protein sequence ID" value="AAT47737.1"/>
    <property type="molecule type" value="mRNA"/>
</dbReference>
<dbReference type="EMBL" id="S83614">
    <property type="protein sequence ID" value="AAB21476.1"/>
    <property type="molecule type" value="Genomic_DNA"/>
</dbReference>
<dbReference type="EMBL" id="L10614">
    <property type="protein sequence ID" value="AAA91849.1"/>
    <property type="molecule type" value="Genomic_DNA"/>
</dbReference>
<dbReference type="CCDS" id="CCDS2448.1">
    <molecule id="P23760-8"/>
</dbReference>
<dbReference type="CCDS" id="CCDS2449.1">
    <molecule id="P23760-5"/>
</dbReference>
<dbReference type="CCDS" id="CCDS2450.1">
    <molecule id="P23760-4"/>
</dbReference>
<dbReference type="CCDS" id="CCDS2451.1">
    <molecule id="P23760-3"/>
</dbReference>
<dbReference type="CCDS" id="CCDS42825.1">
    <molecule id="P23760-7"/>
</dbReference>
<dbReference type="CCDS" id="CCDS42826.1">
    <molecule id="P23760-1"/>
</dbReference>
<dbReference type="CCDS" id="CCDS46522.1">
    <molecule id="P23760-6"/>
</dbReference>
<dbReference type="CCDS" id="CCDS46523.1">
    <molecule id="P23760-2"/>
</dbReference>
<dbReference type="PIR" id="I54276">
    <property type="entry name" value="I54276"/>
</dbReference>
<dbReference type="PIR" id="I68547">
    <property type="entry name" value="I68547"/>
</dbReference>
<dbReference type="PIR" id="S06960">
    <property type="entry name" value="S06960"/>
</dbReference>
<dbReference type="RefSeq" id="NP_000429.2">
    <molecule id="P23760-2"/>
    <property type="nucleotide sequence ID" value="NM_000438.5"/>
</dbReference>
<dbReference type="RefSeq" id="NP_001120838.1">
    <molecule id="P23760-6"/>
    <property type="nucleotide sequence ID" value="NM_001127366.3"/>
</dbReference>
<dbReference type="RefSeq" id="NP_039230.1">
    <molecule id="P23760-3"/>
    <property type="nucleotide sequence ID" value="NM_013942.5"/>
</dbReference>
<dbReference type="RefSeq" id="NP_852122.1">
    <molecule id="P23760-1"/>
    <property type="nucleotide sequence ID" value="NM_181457.4"/>
</dbReference>
<dbReference type="RefSeq" id="NP_852123.1">
    <molecule id="P23760-7"/>
    <property type="nucleotide sequence ID" value="NM_181458.4"/>
</dbReference>
<dbReference type="RefSeq" id="NP_852124.1">
    <molecule id="P23760-8"/>
    <property type="nucleotide sequence ID" value="NM_181459.4"/>
</dbReference>
<dbReference type="RefSeq" id="NP_852125.1">
    <molecule id="P23760-5"/>
    <property type="nucleotide sequence ID" value="NM_181460.4"/>
</dbReference>
<dbReference type="RefSeq" id="NP_852126.1">
    <molecule id="P23760-4"/>
    <property type="nucleotide sequence ID" value="NM_181461.4"/>
</dbReference>
<dbReference type="PDB" id="3CMY">
    <property type="method" value="X-ray"/>
    <property type="resolution" value="1.95 A"/>
    <property type="chains" value="A=219-278"/>
</dbReference>
<dbReference type="PDBsum" id="3CMY"/>
<dbReference type="SMR" id="P23760"/>
<dbReference type="BioGRID" id="111111">
    <property type="interactions" value="37"/>
</dbReference>
<dbReference type="CORUM" id="P23760"/>
<dbReference type="FunCoup" id="P23760">
    <property type="interactions" value="906"/>
</dbReference>
<dbReference type="IntAct" id="P23760">
    <property type="interactions" value="25"/>
</dbReference>
<dbReference type="MINT" id="P23760"/>
<dbReference type="STRING" id="9606.ENSP00000375921"/>
<dbReference type="BindingDB" id="P23760"/>
<dbReference type="iPTMnet" id="P23760"/>
<dbReference type="PhosphoSitePlus" id="P23760"/>
<dbReference type="BioMuta" id="PAX3"/>
<dbReference type="DMDM" id="1172022"/>
<dbReference type="jPOST" id="P23760"/>
<dbReference type="MassIVE" id="P23760"/>
<dbReference type="PaxDb" id="9606-ENSP00000375921"/>
<dbReference type="PeptideAtlas" id="P23760"/>
<dbReference type="ProteomicsDB" id="33896"/>
<dbReference type="ProteomicsDB" id="54150">
    <molecule id="P23760-1"/>
</dbReference>
<dbReference type="ProteomicsDB" id="54151">
    <molecule id="P23760-2"/>
</dbReference>
<dbReference type="ProteomicsDB" id="54152">
    <molecule id="P23760-3"/>
</dbReference>
<dbReference type="ProteomicsDB" id="54153">
    <molecule id="P23760-4"/>
</dbReference>
<dbReference type="ProteomicsDB" id="54154">
    <molecule id="P23760-5"/>
</dbReference>
<dbReference type="ProteomicsDB" id="54155">
    <molecule id="P23760-6"/>
</dbReference>
<dbReference type="ProteomicsDB" id="54156">
    <molecule id="P23760-7"/>
</dbReference>
<dbReference type="Pumba" id="P23760"/>
<dbReference type="Antibodypedia" id="4602">
    <property type="antibodies" value="567 antibodies from 44 providers"/>
</dbReference>
<dbReference type="DNASU" id="5077"/>
<dbReference type="Ensembl" id="ENST00000258387.6">
    <molecule id="P23760-3"/>
    <property type="protein sequence ID" value="ENSP00000258387.5"/>
    <property type="gene ID" value="ENSG00000135903.20"/>
</dbReference>
<dbReference type="Ensembl" id="ENST00000336840.11">
    <molecule id="P23760-5"/>
    <property type="protein sequence ID" value="ENSP00000338767.5"/>
    <property type="gene ID" value="ENSG00000135903.20"/>
</dbReference>
<dbReference type="Ensembl" id="ENST00000344493.9">
    <molecule id="P23760-4"/>
    <property type="protein sequence ID" value="ENSP00000342092.4"/>
    <property type="gene ID" value="ENSG00000135903.20"/>
</dbReference>
<dbReference type="Ensembl" id="ENST00000350526.9">
    <molecule id="P23760-1"/>
    <property type="protein sequence ID" value="ENSP00000343052.4"/>
    <property type="gene ID" value="ENSG00000135903.20"/>
</dbReference>
<dbReference type="Ensembl" id="ENST00000392069.6">
    <molecule id="P23760-8"/>
    <property type="protein sequence ID" value="ENSP00000375921.2"/>
    <property type="gene ID" value="ENSG00000135903.20"/>
</dbReference>
<dbReference type="Ensembl" id="ENST00000392070.7">
    <molecule id="P23760-7"/>
    <property type="protein sequence ID" value="ENSP00000375922.3"/>
    <property type="gene ID" value="ENSG00000135903.20"/>
</dbReference>
<dbReference type="Ensembl" id="ENST00000409551.7">
    <molecule id="P23760-6"/>
    <property type="protein sequence ID" value="ENSP00000386750.3"/>
    <property type="gene ID" value="ENSG00000135903.20"/>
</dbReference>
<dbReference type="Ensembl" id="ENST00000409828.7">
    <molecule id="P23760-2"/>
    <property type="protein sequence ID" value="ENSP00000386817.3"/>
    <property type="gene ID" value="ENSG00000135903.20"/>
</dbReference>
<dbReference type="GeneID" id="5077"/>
<dbReference type="KEGG" id="hsa:5077"/>
<dbReference type="MANE-Select" id="ENST00000392070.7">
    <molecule id="P23760-7"/>
    <property type="protein sequence ID" value="ENSP00000375922.3"/>
    <property type="RefSeq nucleotide sequence ID" value="NM_181458.4"/>
    <property type="RefSeq protein sequence ID" value="NP_852123.1"/>
</dbReference>
<dbReference type="UCSC" id="uc002vmt.3">
    <molecule id="P23760-1"/>
    <property type="organism name" value="human"/>
</dbReference>
<dbReference type="AGR" id="HGNC:8617"/>
<dbReference type="CTD" id="5077"/>
<dbReference type="DisGeNET" id="5077"/>
<dbReference type="GeneCards" id="PAX3"/>
<dbReference type="GeneReviews" id="PAX3"/>
<dbReference type="HGNC" id="HGNC:8617">
    <property type="gene designation" value="PAX3"/>
</dbReference>
<dbReference type="HPA" id="ENSG00000135903">
    <property type="expression patterns" value="Tissue enhanced (brain, salivary gland, skeletal muscle, skin)"/>
</dbReference>
<dbReference type="MalaCards" id="PAX3"/>
<dbReference type="MIM" id="122880">
    <property type="type" value="phenotype"/>
</dbReference>
<dbReference type="MIM" id="148820">
    <property type="type" value="phenotype"/>
</dbReference>
<dbReference type="MIM" id="193500">
    <property type="type" value="phenotype"/>
</dbReference>
<dbReference type="MIM" id="268220">
    <property type="type" value="phenotype"/>
</dbReference>
<dbReference type="MIM" id="606597">
    <property type="type" value="gene"/>
</dbReference>
<dbReference type="neXtProt" id="NX_P23760"/>
<dbReference type="OpenTargets" id="ENSG00000135903"/>
<dbReference type="Orphanet" id="99756">
    <property type="disease" value="Alveolar rhabdomyosarcoma"/>
</dbReference>
<dbReference type="Orphanet" id="1529">
    <property type="disease" value="Craniofacial-deafness-hand syndrome"/>
</dbReference>
<dbReference type="Orphanet" id="894">
    <property type="disease" value="Waardenburg syndrome type 1"/>
</dbReference>
<dbReference type="Orphanet" id="896">
    <property type="disease" value="Waardenburg syndrome type 3"/>
</dbReference>
<dbReference type="PharmGKB" id="PA32957"/>
<dbReference type="VEuPathDB" id="HostDB:ENSG00000135903"/>
<dbReference type="eggNOG" id="KOG0849">
    <property type="taxonomic scope" value="Eukaryota"/>
</dbReference>
<dbReference type="GeneTree" id="ENSGT00940000156504"/>
<dbReference type="HOGENOM" id="CLU_019281_8_0_1"/>
<dbReference type="InParanoid" id="P23760"/>
<dbReference type="OMA" id="PDIACFQ"/>
<dbReference type="OrthoDB" id="6159439at2759"/>
<dbReference type="PAN-GO" id="P23760">
    <property type="GO annotations" value="4 GO annotations based on evolutionary models"/>
</dbReference>
<dbReference type="PhylomeDB" id="P23760"/>
<dbReference type="TreeFam" id="TF351610"/>
<dbReference type="PathwayCommons" id="P23760"/>
<dbReference type="Reactome" id="R-HSA-3214847">
    <property type="pathway name" value="HATs acetylate histones"/>
</dbReference>
<dbReference type="Reactome" id="R-HSA-9834899">
    <property type="pathway name" value="Specification of the neural plate border"/>
</dbReference>
<dbReference type="Reactome" id="R-HSA-9856649">
    <property type="pathway name" value="Transcriptional and post-translational regulation of MITF-M expression and activity"/>
</dbReference>
<dbReference type="SignaLink" id="P23760"/>
<dbReference type="SIGNOR" id="P23760"/>
<dbReference type="BioGRID-ORCS" id="5077">
    <property type="hits" value="18 hits in 1167 CRISPR screens"/>
</dbReference>
<dbReference type="ChiTaRS" id="PAX3">
    <property type="organism name" value="human"/>
</dbReference>
<dbReference type="EvolutionaryTrace" id="P23760"/>
<dbReference type="GeneWiki" id="PAX3"/>
<dbReference type="GenomeRNAi" id="5077"/>
<dbReference type="Pharos" id="P23760">
    <property type="development level" value="Tbio"/>
</dbReference>
<dbReference type="PRO" id="PR:P23760"/>
<dbReference type="Proteomes" id="UP000005640">
    <property type="component" value="Chromosome 2"/>
</dbReference>
<dbReference type="RNAct" id="P23760">
    <property type="molecule type" value="protein"/>
</dbReference>
<dbReference type="Bgee" id="ENSG00000135903">
    <property type="expression patterns" value="Expressed in olfactory segment of nasal mucosa and 82 other cell types or tissues"/>
</dbReference>
<dbReference type="GO" id="GO:0000785">
    <property type="term" value="C:chromatin"/>
    <property type="evidence" value="ECO:0000247"/>
    <property type="project" value="NTNU_SB"/>
</dbReference>
<dbReference type="GO" id="GO:0005654">
    <property type="term" value="C:nucleoplasm"/>
    <property type="evidence" value="ECO:0000314"/>
    <property type="project" value="HPA"/>
</dbReference>
<dbReference type="GO" id="GO:0003700">
    <property type="term" value="F:DNA-binding transcription factor activity"/>
    <property type="evidence" value="ECO:0000304"/>
    <property type="project" value="ProtInc"/>
</dbReference>
<dbReference type="GO" id="GO:0000981">
    <property type="term" value="F:DNA-binding transcription factor activity, RNA polymerase II-specific"/>
    <property type="evidence" value="ECO:0000247"/>
    <property type="project" value="NTNU_SB"/>
</dbReference>
<dbReference type="GO" id="GO:0000978">
    <property type="term" value="F:RNA polymerase II cis-regulatory region sequence-specific DNA binding"/>
    <property type="evidence" value="ECO:0000318"/>
    <property type="project" value="GO_Central"/>
</dbReference>
<dbReference type="GO" id="GO:0043565">
    <property type="term" value="F:sequence-specific DNA binding"/>
    <property type="evidence" value="ECO:0000314"/>
    <property type="project" value="MGI"/>
</dbReference>
<dbReference type="GO" id="GO:1990837">
    <property type="term" value="F:sequence-specific double-stranded DNA binding"/>
    <property type="evidence" value="ECO:0000314"/>
    <property type="project" value="ARUK-UCL"/>
</dbReference>
<dbReference type="GO" id="GO:0009887">
    <property type="term" value="P:animal organ morphogenesis"/>
    <property type="evidence" value="ECO:0000304"/>
    <property type="project" value="ProtInc"/>
</dbReference>
<dbReference type="GO" id="GO:0006915">
    <property type="term" value="P:apoptotic process"/>
    <property type="evidence" value="ECO:0000304"/>
    <property type="project" value="ProtInc"/>
</dbReference>
<dbReference type="GO" id="GO:0007517">
    <property type="term" value="P:muscle organ development"/>
    <property type="evidence" value="ECO:0007669"/>
    <property type="project" value="UniProtKB-KW"/>
</dbReference>
<dbReference type="GO" id="GO:0007399">
    <property type="term" value="P:nervous system development"/>
    <property type="evidence" value="ECO:0000318"/>
    <property type="project" value="GO_Central"/>
</dbReference>
<dbReference type="GO" id="GO:0045893">
    <property type="term" value="P:positive regulation of DNA-templated transcription"/>
    <property type="evidence" value="ECO:0000314"/>
    <property type="project" value="MGI"/>
</dbReference>
<dbReference type="GO" id="GO:0045944">
    <property type="term" value="P:positive regulation of transcription by RNA polymerase II"/>
    <property type="evidence" value="ECO:0000314"/>
    <property type="project" value="MGI"/>
</dbReference>
<dbReference type="GO" id="GO:0006357">
    <property type="term" value="P:regulation of transcription by RNA polymerase II"/>
    <property type="evidence" value="ECO:0000318"/>
    <property type="project" value="GO_Central"/>
</dbReference>
<dbReference type="GO" id="GO:0007605">
    <property type="term" value="P:sensory perception of sound"/>
    <property type="evidence" value="ECO:0000304"/>
    <property type="project" value="ProtInc"/>
</dbReference>
<dbReference type="CDD" id="cd00086">
    <property type="entry name" value="homeodomain"/>
    <property type="match status" value="1"/>
</dbReference>
<dbReference type="CDD" id="cd00131">
    <property type="entry name" value="PAX"/>
    <property type="match status" value="1"/>
</dbReference>
<dbReference type="FunFam" id="1.10.10.10:FF:000080">
    <property type="entry name" value="paired box protein Pax-3 isoform X2"/>
    <property type="match status" value="1"/>
</dbReference>
<dbReference type="FunFam" id="1.10.10.60:FF:000035">
    <property type="entry name" value="paired box protein Pax-3 isoform X2"/>
    <property type="match status" value="1"/>
</dbReference>
<dbReference type="FunFam" id="1.10.10.10:FF:000031">
    <property type="entry name" value="Paired box protein Pax-7"/>
    <property type="match status" value="1"/>
</dbReference>
<dbReference type="Gene3D" id="1.10.10.60">
    <property type="entry name" value="Homeodomain-like"/>
    <property type="match status" value="1"/>
</dbReference>
<dbReference type="Gene3D" id="1.10.10.10">
    <property type="entry name" value="Winged helix-like DNA-binding domain superfamily/Winged helix DNA-binding domain"/>
    <property type="match status" value="2"/>
</dbReference>
<dbReference type="InterPro" id="IPR001356">
    <property type="entry name" value="HD"/>
</dbReference>
<dbReference type="InterPro" id="IPR017970">
    <property type="entry name" value="Homeobox_CS"/>
</dbReference>
<dbReference type="InterPro" id="IPR009057">
    <property type="entry name" value="Homeodomain-like_sf"/>
</dbReference>
<dbReference type="InterPro" id="IPR043182">
    <property type="entry name" value="PAIRED_DNA-bd_dom"/>
</dbReference>
<dbReference type="InterPro" id="IPR001523">
    <property type="entry name" value="Paired_dom"/>
</dbReference>
<dbReference type="InterPro" id="IPR022106">
    <property type="entry name" value="Pax7_C"/>
</dbReference>
<dbReference type="InterPro" id="IPR043565">
    <property type="entry name" value="PAX_fam"/>
</dbReference>
<dbReference type="InterPro" id="IPR036388">
    <property type="entry name" value="WH-like_DNA-bd_sf"/>
</dbReference>
<dbReference type="PANTHER" id="PTHR45636:SF17">
    <property type="entry name" value="PAIRED BOX PROTEIN PAX-3"/>
    <property type="match status" value="1"/>
</dbReference>
<dbReference type="PANTHER" id="PTHR45636">
    <property type="entry name" value="PAIRED BOX PROTEIN PAX-6-RELATED-RELATED"/>
    <property type="match status" value="1"/>
</dbReference>
<dbReference type="Pfam" id="PF00046">
    <property type="entry name" value="Homeodomain"/>
    <property type="match status" value="1"/>
</dbReference>
<dbReference type="Pfam" id="PF00292">
    <property type="entry name" value="PAX"/>
    <property type="match status" value="1"/>
</dbReference>
<dbReference type="Pfam" id="PF12360">
    <property type="entry name" value="Pax7"/>
    <property type="match status" value="1"/>
</dbReference>
<dbReference type="PRINTS" id="PR00027">
    <property type="entry name" value="PAIREDBOX"/>
</dbReference>
<dbReference type="SMART" id="SM00389">
    <property type="entry name" value="HOX"/>
    <property type="match status" value="1"/>
</dbReference>
<dbReference type="SMART" id="SM00351">
    <property type="entry name" value="PAX"/>
    <property type="match status" value="1"/>
</dbReference>
<dbReference type="SUPFAM" id="SSF46689">
    <property type="entry name" value="Homeodomain-like"/>
    <property type="match status" value="2"/>
</dbReference>
<dbReference type="PROSITE" id="PS00027">
    <property type="entry name" value="HOMEOBOX_1"/>
    <property type="match status" value="1"/>
</dbReference>
<dbReference type="PROSITE" id="PS50071">
    <property type="entry name" value="HOMEOBOX_2"/>
    <property type="match status" value="1"/>
</dbReference>
<dbReference type="PROSITE" id="PS00034">
    <property type="entry name" value="PAIRED_1"/>
    <property type="match status" value="1"/>
</dbReference>
<dbReference type="PROSITE" id="PS51057">
    <property type="entry name" value="PAIRED_2"/>
    <property type="match status" value="1"/>
</dbReference>
<comment type="function">
    <text evidence="12 17">Transcription factor that may regulate cell proliferation, migration and apoptosis. Involved in neural development and myogenesis. Transcriptional activator of MITF, acting synergistically with SOX10 (PubMed:21965087).</text>
</comment>
<comment type="subunit">
    <text evidence="1 5 14 17">Can bind to DNA as a homodimer or a heterodimer with PAX7. Interacts with PAXBP1; the interaction links PAX3 to a WDR5-containing histone methyltransferase complex. Interacts with DAXX. Interacts with TBX18. Interacts with SOX10 (PubMed:21965087).</text>
</comment>
<comment type="interaction">
    <interactant intactId="EBI-1167564">
        <id>P23760</id>
    </interactant>
    <interactant intactId="EBI-1167176">
        <id>P20265</id>
        <label>POU3F2</label>
    </interactant>
    <organismsDiffer>false</organismsDiffer>
    <experiments>2</experiments>
</comment>
<comment type="interaction">
    <interactant intactId="EBI-1167564">
        <id>P23760</id>
    </interactant>
    <interactant intactId="EBI-1167533">
        <id>P56693</id>
        <label>SOX10</label>
    </interactant>
    <organismsDiffer>false</organismsDiffer>
    <experiments>2</experiments>
</comment>
<comment type="interaction">
    <interactant intactId="EBI-12105196">
        <id>P23760-8</id>
    </interactant>
    <interactant intactId="EBI-747310">
        <id>O94829</id>
        <label>IPO13</label>
    </interactant>
    <organismsDiffer>false</organismsDiffer>
    <experiments>3</experiments>
</comment>
<comment type="interaction">
    <interactant intactId="EBI-12105196">
        <id>P23760-8</id>
    </interactant>
    <interactant intactId="EBI-11962084">
        <id>Q3LI66</id>
        <label>KRTAP6-2</label>
    </interactant>
    <organismsDiffer>false</organismsDiffer>
    <experiments>3</experiments>
</comment>
<comment type="interaction">
    <interactant intactId="EBI-12105196">
        <id>P23760-8</id>
    </interactant>
    <interactant intactId="EBI-10261141">
        <id>Q8IUC2</id>
        <label>KRTAP8-1</label>
    </interactant>
    <organismsDiffer>false</organismsDiffer>
    <experiments>3</experiments>
</comment>
<comment type="subcellular location">
    <subcellularLocation>
        <location evidence="17">Nucleus</location>
    </subcellularLocation>
</comment>
<comment type="alternative products">
    <event type="alternative splicing"/>
    <isoform>
        <id>P23760-1</id>
        <name>Pax3</name>
        <name>Pax3C</name>
        <sequence type="displayed"/>
    </isoform>
    <isoform>
        <id>P23760-2</id>
        <name>Pax3A</name>
        <sequence type="described" ref="VSP_002355 VSP_002356"/>
    </isoform>
    <isoform>
        <id>P23760-3</id>
        <name>Pax3B</name>
        <sequence type="described" ref="VSP_002357 VSP_002358"/>
    </isoform>
    <isoform>
        <id>P23760-4</id>
        <name>Pax3G</name>
        <sequence type="described" ref="VSP_042004"/>
    </isoform>
    <isoform>
        <id>P23760-5</id>
        <name>Pax3H</name>
        <sequence type="described" ref="VSP_042005"/>
    </isoform>
    <isoform>
        <id>P23760-6</id>
        <name>6</name>
        <sequence type="described" ref="VSP_043634 VSP_043635"/>
    </isoform>
    <isoform>
        <id>P23760-7</id>
        <name>7</name>
        <sequence type="described" ref="VSP_043635"/>
    </isoform>
    <isoform>
        <id>P23760-8</id>
        <name>Pax3E</name>
        <sequence type="described" ref="VSP_044915"/>
    </isoform>
</comment>
<comment type="disease" evidence="6 7 8 9 10 13 15 17 19 20 21 23 24 25 26 28 30 31 32 34">
    <disease id="DI-01133">
        <name>Waardenburg syndrome 1</name>
        <acronym>WS1</acronym>
        <description>WS1 is an autosomal dominant disorder characterized by non-progressive sensorineural deafness, pigmentary disturbances such as frontal white blaze of hair, heterochromia of irides, white eyelashes, leukoderma, and wide bridge of nose owing to lateral displacement of the inner canthus of each eye (dystopia canthorum). WS1 shows variable clinical expression and some affected individuals do not manifest hearing impairment or iris pigmentation disturbances. Dystopia canthorum is the most consistent sign and is found in 98% of the patients.</description>
        <dbReference type="MIM" id="193500"/>
    </disease>
    <text>The disease is caused by variants affecting the gene represented in this entry.</text>
</comment>
<comment type="disease" evidence="7 18 23 35">
    <disease id="DI-01138">
        <name>Waardenburg syndrome 3</name>
        <acronym>WS3</acronym>
        <description>WS3 is an autosomal dominant disorder characterized by sensorineural deafness, pigmentary disturbances, dystopia canthorum and limb anomalies such as hypoplasia of the musculoskeletal system, flexion contractures, fusion of the carpal bones, syndactylies.</description>
        <dbReference type="MIM" id="148820"/>
    </disease>
    <text>The disease is caused by variants affecting the gene represented in this entry.</text>
</comment>
<comment type="disease" evidence="27">
    <disease id="DI-01442">
        <name>Craniofacial-deafness-hand syndrome</name>
        <acronym>CDHS</acronym>
        <description>Thought to be an autosomal dominant disease which comprises absence or hypoplasia of the nasal bones, hypoplastic maxilla, small and short nose with thin nares, limited movement of the wrist, short palpebral fissures, ulnar deviation of the fingers, hypertelorism and profound sensory-neural deafness.</description>
        <dbReference type="MIM" id="122880"/>
    </disease>
    <text>The disease is caused by variants affecting the gene represented in this entry.</text>
</comment>
<comment type="disease" evidence="22">
    <disease id="DI-02699">
        <name>Rhabdomyosarcoma 2</name>
        <acronym>RMS2</acronym>
        <description>A form of rhabdomyosarcoma, a highly malignant tumor of striated muscle derived from primitive mesenchymal cells and exhibiting differentiation along rhabdomyoblastic lines. Rhabdomyosarcoma is one of the most frequently occurring soft tissue sarcomas and the most common in children. It occurs in four forms: alveolar, pleomorphic, embryonal and botryoidal rhabdomyosarcomas.</description>
        <dbReference type="MIM" id="268220"/>
    </disease>
    <text evidence="22">The gene represented in this entry is involved in disease pathogenesis. A chromosomal aberration involving PAX3 is found in rhabdomyosarcoma. Translocation (2;13)(q35;q14) with FOXO1. The resulting protein is a transcriptional activator.</text>
</comment>
<comment type="disease">
    <text evidence="11">A chromosomal aberration involving PAX3 is a cause of rhabdomyosarcoma. Translocation t(2;2)(q35;p23) with NCOA1 generates the NCOA1-PAX3 oncogene consisting of the N-terminus part of PAX3 and the C-terminus part of NCOA1. The fusion protein acts as a transcriptional activator. Rhabdomyosarcoma is the most common soft tissue carcinoma in childhood, representing 5-8% of all malignancies in children.</text>
</comment>
<comment type="similarity">
    <text evidence="40">Belongs to the paired homeobox family.</text>
</comment>
<comment type="online information" name="Atlas of Genetics and Cytogenetics in Oncology and Haematology">
    <link uri="https://atlasgeneticsoncology.org/gene/70/PAX3"/>
</comment>
<name>PAX3_HUMAN</name>
<gene>
    <name type="primary">PAX3</name>
    <name type="synonym">HUP2</name>
</gene>
<proteinExistence type="evidence at protein level"/>
<organism>
    <name type="scientific">Homo sapiens</name>
    <name type="common">Human</name>
    <dbReference type="NCBI Taxonomy" id="9606"/>
    <lineage>
        <taxon>Eukaryota</taxon>
        <taxon>Metazoa</taxon>
        <taxon>Chordata</taxon>
        <taxon>Craniata</taxon>
        <taxon>Vertebrata</taxon>
        <taxon>Euteleostomi</taxon>
        <taxon>Mammalia</taxon>
        <taxon>Eutheria</taxon>
        <taxon>Euarchontoglires</taxon>
        <taxon>Primates</taxon>
        <taxon>Haplorrhini</taxon>
        <taxon>Catarrhini</taxon>
        <taxon>Hominidae</taxon>
        <taxon>Homo</taxon>
    </lineage>
</organism>
<feature type="chain" id="PRO_0000050178" description="Paired box protein Pax-3">
    <location>
        <begin position="1"/>
        <end position="479"/>
    </location>
</feature>
<feature type="DNA-binding region" description="Paired" evidence="3">
    <location>
        <begin position="34"/>
        <end position="161"/>
    </location>
</feature>
<feature type="DNA-binding region" description="Homeobox" evidence="2">
    <location>
        <begin position="219"/>
        <end position="278"/>
    </location>
</feature>
<feature type="region of interest" description="Disordered" evidence="4">
    <location>
        <begin position="1"/>
        <end position="21"/>
    </location>
</feature>
<feature type="region of interest" description="PAI subdomain" evidence="3">
    <location>
        <begin position="37"/>
        <end position="93"/>
    </location>
</feature>
<feature type="region of interest" description="RED subdomain" evidence="3">
    <location>
        <begin position="113"/>
        <end position="161"/>
    </location>
</feature>
<feature type="region of interest" description="Disordered" evidence="4">
    <location>
        <begin position="165"/>
        <end position="228"/>
    </location>
</feature>
<feature type="region of interest" description="Disordered" evidence="4">
    <location>
        <begin position="309"/>
        <end position="351"/>
    </location>
</feature>
<feature type="compositionally biased region" description="Basic and acidic residues" evidence="4">
    <location>
        <begin position="172"/>
        <end position="188"/>
    </location>
</feature>
<feature type="compositionally biased region" description="Polar residues" evidence="4">
    <location>
        <begin position="309"/>
        <end position="329"/>
    </location>
</feature>
<feature type="compositionally biased region" description="Polar residues" evidence="4">
    <location>
        <begin position="338"/>
        <end position="351"/>
    </location>
</feature>
<feature type="site" description="Breakpoint for translocation to form PAX3-NCOA1 oncogene">
    <location>
        <begin position="319"/>
        <end position="320"/>
    </location>
</feature>
<feature type="modified residue" description="Phosphoserine" evidence="16">
    <location>
        <position position="201"/>
    </location>
</feature>
<feature type="modified residue" description="Phosphoserine" evidence="16">
    <location>
        <position position="205"/>
    </location>
</feature>
<feature type="modified residue" description="Phosphoserine" evidence="16">
    <location>
        <position position="209"/>
    </location>
</feature>
<feature type="splice variant" id="VSP_043634" description="In isoform 6." evidence="38">
    <location>
        <position position="108"/>
    </location>
</feature>
<feature type="splice variant" id="VSP_002355" description="In isoform Pax3A." evidence="39">
    <original>ASAPQSDEGSDIDSEPDLPL</original>
    <variation>GKRWRLGRRTCWVTWRASAS</variation>
    <location>
        <begin position="196"/>
        <end position="215"/>
    </location>
</feature>
<feature type="splice variant" id="VSP_002357" description="In isoform Pax3B." evidence="38 39">
    <original>ASAPQSDEGSD</original>
    <variation>GKALVSGVSSH</variation>
    <location>
        <begin position="196"/>
        <end position="206"/>
    </location>
</feature>
<feature type="splice variant" id="VSP_002358" description="In isoform Pax3B." evidence="38 39">
    <location>
        <begin position="207"/>
        <end position="479"/>
    </location>
</feature>
<feature type="splice variant" id="VSP_002356" description="In isoform Pax3A." evidence="39">
    <location>
        <begin position="216"/>
        <end position="479"/>
    </location>
</feature>
<feature type="splice variant" id="VSP_042004" description="In isoform Pax3G." evidence="36">
    <original>MGLLTNHGGVPHQPQTDYALSPLTGGLEPTTTVSASCSQRLDHMKSLDSLPTSQSYCPPTYSTTGYSMDPVTGYQYGQYGQSKPWTF</original>
    <variation>PFIISSQISRK</variation>
    <location>
        <begin position="393"/>
        <end position="479"/>
    </location>
</feature>
<feature type="splice variant" id="VSP_042005" description="In isoform Pax3H." evidence="36">
    <original>MGLLTNHGGVPHQPQTDYALSPLTGGLEPTTTVSASCSQRLDHMKSLDSLPTSQSYCPPTYSTTGYSMDPVTGYQYGQYGQSKPWTF</original>
    <variation>PFIISSQISLGFKSF</variation>
    <location>
        <begin position="393"/>
        <end position="479"/>
    </location>
</feature>
<feature type="splice variant" id="VSP_043635" description="In isoform 6 and isoform 7." evidence="37 38">
    <original>KPWTF</original>
    <variation>AFHYLKPDIA</variation>
    <location>
        <begin position="475"/>
        <end position="479"/>
    </location>
</feature>
<feature type="splice variant" id="VSP_044915" description="In isoform Pax3E." evidence="40">
    <original>KPWTF</original>
    <variation>AFHYLKPDIAWFQILLNTFDKSSGEEEDLEQ</variation>
    <location>
        <begin position="475"/>
        <end position="479"/>
    </location>
</feature>
<feature type="sequence variant" id="VAR_003790" description="In WS1." evidence="21">
    <original>F</original>
    <variation>L</variation>
    <location>
        <position position="45"/>
    </location>
</feature>
<feature type="sequence variant" id="VAR_003791" description="In WS3; dbSNP:rs104893653." evidence="23">
    <original>N</original>
    <variation>H</variation>
    <location>
        <position position="47"/>
    </location>
</feature>
<feature type="sequence variant" id="VAR_003792" description="In CDHS; dbSNP:rs104893652." evidence="27">
    <original>N</original>
    <variation>K</variation>
    <location>
        <position position="47"/>
    </location>
</feature>
<feature type="sequence variant" id="VAR_017533" description="In WS1; dbSNP:rs1419548558." evidence="28">
    <original>G</original>
    <variation>R</variation>
    <location>
        <position position="48"/>
    </location>
</feature>
<feature type="sequence variant" id="VAR_003793" description="In WS1; dbSNP:rs104893650." evidence="10">
    <original>P</original>
    <variation>L</variation>
    <location>
        <position position="50"/>
    </location>
</feature>
<feature type="sequence variant" id="VAR_003794" description="In WS1; dbSNP:rs267606931." evidence="23">
    <original>R</original>
    <variation>L</variation>
    <location>
        <position position="56"/>
    </location>
</feature>
<feature type="sequence variant" id="VAR_003795" description="In WS1." evidence="30">
    <original>I</original>
    <variation>F</variation>
    <location>
        <position position="59"/>
    </location>
</feature>
<feature type="sequence variant" id="VAR_003796" description="In WS1." evidence="34">
    <original>I</original>
    <variation>N</variation>
    <location>
        <position position="59"/>
    </location>
</feature>
<feature type="sequence variant" id="VAR_003797" description="In WS1." evidence="7 25">
    <original>V</original>
    <variation>M</variation>
    <location>
        <position position="60"/>
    </location>
</feature>
<feature type="sequence variant" id="VAR_003798" description="In WS1; dbSNP:rs2106203978." evidence="20 31">
    <original>M</original>
    <variation>V</variation>
    <location>
        <position position="62"/>
    </location>
</feature>
<feature type="sequence variant" id="VAR_003799" description="In WS1." evidence="9">
    <location>
        <begin position="63"/>
        <end position="67"/>
    </location>
</feature>
<feature type="sequence variant" id="VAR_013640" description="In WS1; dbSNP:rs1553593928." evidence="6">
    <original>S</original>
    <variation>L</variation>
    <location>
        <position position="73"/>
    </location>
</feature>
<feature type="sequence variant" id="VAR_017534" description="In WS1." evidence="26">
    <original>V</original>
    <variation>M</variation>
    <location>
        <position position="78"/>
    </location>
</feature>
<feature type="sequence variant" id="VAR_079619" description="In WS1; results in decreased transcriptional activation of MITF; no effect on localization to nucleus; no effect on interaction with SOX10; dbSNP:rs387906947." evidence="15 17">
    <original>H</original>
    <variation>D</variation>
    <location>
        <position position="80"/>
    </location>
</feature>
<feature type="sequence variant" id="VAR_003800" description="In WS1; originally classified as Waardenburg syndrome type 2; dbSNP:rs587776586." evidence="24 26">
    <original>G</original>
    <variation>A</variation>
    <location>
        <position position="81"/>
    </location>
</feature>
<feature type="sequence variant" id="VAR_003801" description="In WS3; dbSNP:rs104893651." evidence="18">
    <original>S</original>
    <variation>F</variation>
    <location>
        <position position="84"/>
    </location>
</feature>
<feature type="sequence variant" id="VAR_003802" description="In WS1." evidence="25">
    <original>K</original>
    <variation>E</variation>
    <location>
        <position position="85"/>
    </location>
</feature>
<feature type="sequence variant" id="VAR_017535" description="In WS3; dbSNP:rs104893654." evidence="7">
    <original>Y</original>
    <variation>H</variation>
    <location>
        <position position="90"/>
    </location>
</feature>
<feature type="sequence variant" id="VAR_003803" description="In WS1; dbSNP:rs1189463428." evidence="21 26">
    <original>G</original>
    <variation>D</variation>
    <location>
        <position position="99"/>
    </location>
</feature>
<feature type="sequence variant" id="VAR_079620" description="In WS1." evidence="15 28">
    <location>
        <begin position="223"/>
        <end position="479"/>
    </location>
</feature>
<feature type="sequence variant" id="VAR_079621" description="In WS1." evidence="13 15">
    <original>L</original>
    <variation>P</variation>
    <location>
        <position position="234"/>
    </location>
</feature>
<feature type="sequence variant" id="VAR_003804" description="In WS1; dbSNP:rs2106095147." evidence="25">
    <original>F</original>
    <variation>S</variation>
    <location>
        <position position="238"/>
    </location>
</feature>
<feature type="sequence variant" id="VAR_003805" description="In WS1; dbSNP:rs1210072810." evidence="19">
    <original>V</original>
    <variation>F</variation>
    <location>
        <position position="265"/>
    </location>
</feature>
<feature type="sequence variant" id="VAR_017536" description="In WS1." evidence="26">
    <original>W</original>
    <variation>C</variation>
    <location>
        <position position="266"/>
    </location>
</feature>
<feature type="sequence variant" id="VAR_013619" description="In WS1 and WS3; dbSNP:rs1228590199." evidence="26 28 35">
    <original>R</original>
    <variation>C</variation>
    <location>
        <position position="270"/>
    </location>
</feature>
<feature type="sequence variant" id="VAR_017537" description="In WS1; dbSNP:rs1380858784." evidence="26">
    <original>R</original>
    <variation>C</variation>
    <location>
        <position position="271"/>
    </location>
</feature>
<feature type="sequence variant" id="VAR_003806" description="In WS1." evidence="19">
    <original>R</original>
    <variation>G</variation>
    <location>
        <position position="271"/>
    </location>
</feature>
<feature type="sequence variant" id="VAR_017538" description="In WS1; dbSNP:rs774528745." evidence="15 26 28">
    <original>R</original>
    <variation>H</variation>
    <location>
        <position position="271"/>
    </location>
</feature>
<feature type="sequence variant" id="VAR_017539" description="In WS1; uncertain significance; dbSNP:rs1020175890." evidence="28">
    <original>R</original>
    <variation>K</variation>
    <location>
        <position position="273"/>
    </location>
</feature>
<feature type="sequence variant" id="VAR_003807" description="In dbSNP:rs2234675." evidence="26 28 29 33">
    <original>T</original>
    <variation>K</variation>
    <location>
        <position position="315"/>
    </location>
</feature>
<feature type="sequence variant" id="VAR_013641" description="In WS1." evidence="32">
    <original>Q</original>
    <variation>H</variation>
    <location>
        <position position="391"/>
    </location>
</feature>
<feature type="sequence conflict" description="In Ref. 1; AAP13872/AAP13873." evidence="40" ref="1">
    <original>S</original>
    <variation>R</variation>
    <location>
        <position position="358"/>
    </location>
</feature>
<feature type="helix" evidence="41">
    <location>
        <begin position="228"/>
        <end position="240"/>
    </location>
</feature>
<feature type="helix" evidence="41">
    <location>
        <begin position="246"/>
        <end position="256"/>
    </location>
</feature>
<feature type="helix" evidence="41">
    <location>
        <begin position="260"/>
        <end position="276"/>
    </location>
</feature>
<reference key="1">
    <citation type="journal article" date="2004" name="Int. J. Cancer">
        <title>Expression of PAX 3 alternatively spliced transcripts and identification of two new isoforms in human tumors of neural crest origin.</title>
        <authorList>
            <person name="Parker C.J."/>
            <person name="Shawcross S.G."/>
            <person name="Li H."/>
            <person name="Wang Q.-Y."/>
            <person name="Herrington C.S."/>
            <person name="Kumar S."/>
            <person name="MacKie R.M."/>
            <person name="Prime W."/>
            <person name="Renne I.G."/>
            <person name="Sisley K."/>
            <person name="Kumar P."/>
        </authorList>
    </citation>
    <scope>NUCLEOTIDE SEQUENCE [MRNA] (ISOFORMS PAX3G AND PAX3H)</scope>
    <scope>ALTERNATIVE SPLICING</scope>
</reference>
<reference key="2">
    <citation type="journal article" date="2004" name="Nat. Genet.">
        <title>Complete sequencing and characterization of 21,243 full-length human cDNAs.</title>
        <authorList>
            <person name="Ota T."/>
            <person name="Suzuki Y."/>
            <person name="Nishikawa T."/>
            <person name="Otsuki T."/>
            <person name="Sugiyama T."/>
            <person name="Irie R."/>
            <person name="Wakamatsu A."/>
            <person name="Hayashi K."/>
            <person name="Sato H."/>
            <person name="Nagai K."/>
            <person name="Kimura K."/>
            <person name="Makita H."/>
            <person name="Sekine M."/>
            <person name="Obayashi M."/>
            <person name="Nishi T."/>
            <person name="Shibahara T."/>
            <person name="Tanaka T."/>
            <person name="Ishii S."/>
            <person name="Yamamoto J."/>
            <person name="Saito K."/>
            <person name="Kawai Y."/>
            <person name="Isono Y."/>
            <person name="Nakamura Y."/>
            <person name="Nagahari K."/>
            <person name="Murakami K."/>
            <person name="Yasuda T."/>
            <person name="Iwayanagi T."/>
            <person name="Wagatsuma M."/>
            <person name="Shiratori A."/>
            <person name="Sudo H."/>
            <person name="Hosoiri T."/>
            <person name="Kaku Y."/>
            <person name="Kodaira H."/>
            <person name="Kondo H."/>
            <person name="Sugawara M."/>
            <person name="Takahashi M."/>
            <person name="Kanda K."/>
            <person name="Yokoi T."/>
            <person name="Furuya T."/>
            <person name="Kikkawa E."/>
            <person name="Omura Y."/>
            <person name="Abe K."/>
            <person name="Kamihara K."/>
            <person name="Katsuta N."/>
            <person name="Sato K."/>
            <person name="Tanikawa M."/>
            <person name="Yamazaki M."/>
            <person name="Ninomiya K."/>
            <person name="Ishibashi T."/>
            <person name="Yamashita H."/>
            <person name="Murakawa K."/>
            <person name="Fujimori K."/>
            <person name="Tanai H."/>
            <person name="Kimata M."/>
            <person name="Watanabe M."/>
            <person name="Hiraoka S."/>
            <person name="Chiba Y."/>
            <person name="Ishida S."/>
            <person name="Ono Y."/>
            <person name="Takiguchi S."/>
            <person name="Watanabe S."/>
            <person name="Yosida M."/>
            <person name="Hotuta T."/>
            <person name="Kusano J."/>
            <person name="Kanehori K."/>
            <person name="Takahashi-Fujii A."/>
            <person name="Hara H."/>
            <person name="Tanase T.-O."/>
            <person name="Nomura Y."/>
            <person name="Togiya S."/>
            <person name="Komai F."/>
            <person name="Hara R."/>
            <person name="Takeuchi K."/>
            <person name="Arita M."/>
            <person name="Imose N."/>
            <person name="Musashino K."/>
            <person name="Yuuki H."/>
            <person name="Oshima A."/>
            <person name="Sasaki N."/>
            <person name="Aotsuka S."/>
            <person name="Yoshikawa Y."/>
            <person name="Matsunawa H."/>
            <person name="Ichihara T."/>
            <person name="Shiohata N."/>
            <person name="Sano S."/>
            <person name="Moriya S."/>
            <person name="Momiyama H."/>
            <person name="Satoh N."/>
            <person name="Takami S."/>
            <person name="Terashima Y."/>
            <person name="Suzuki O."/>
            <person name="Nakagawa S."/>
            <person name="Senoh A."/>
            <person name="Mizoguchi H."/>
            <person name="Goto Y."/>
            <person name="Shimizu F."/>
            <person name="Wakebe H."/>
            <person name="Hishigaki H."/>
            <person name="Watanabe T."/>
            <person name="Sugiyama A."/>
            <person name="Takemoto M."/>
            <person name="Kawakami B."/>
            <person name="Yamazaki M."/>
            <person name="Watanabe K."/>
            <person name="Kumagai A."/>
            <person name="Itakura S."/>
            <person name="Fukuzumi Y."/>
            <person name="Fujimori Y."/>
            <person name="Komiyama M."/>
            <person name="Tashiro H."/>
            <person name="Tanigami A."/>
            <person name="Fujiwara T."/>
            <person name="Ono T."/>
            <person name="Yamada K."/>
            <person name="Fujii Y."/>
            <person name="Ozaki K."/>
            <person name="Hirao M."/>
            <person name="Ohmori Y."/>
            <person name="Kawabata A."/>
            <person name="Hikiji T."/>
            <person name="Kobatake N."/>
            <person name="Inagaki H."/>
            <person name="Ikema Y."/>
            <person name="Okamoto S."/>
            <person name="Okitani R."/>
            <person name="Kawakami T."/>
            <person name="Noguchi S."/>
            <person name="Itoh T."/>
            <person name="Shigeta K."/>
            <person name="Senba T."/>
            <person name="Matsumura K."/>
            <person name="Nakajima Y."/>
            <person name="Mizuno T."/>
            <person name="Morinaga M."/>
            <person name="Sasaki M."/>
            <person name="Togashi T."/>
            <person name="Oyama M."/>
            <person name="Hata H."/>
            <person name="Watanabe M."/>
            <person name="Komatsu T."/>
            <person name="Mizushima-Sugano J."/>
            <person name="Satoh T."/>
            <person name="Shirai Y."/>
            <person name="Takahashi Y."/>
            <person name="Nakagawa K."/>
            <person name="Okumura K."/>
            <person name="Nagase T."/>
            <person name="Nomura N."/>
            <person name="Kikuchi H."/>
            <person name="Masuho Y."/>
            <person name="Yamashita R."/>
            <person name="Nakai K."/>
            <person name="Yada T."/>
            <person name="Nakamura Y."/>
            <person name="Ohara O."/>
            <person name="Isogai T."/>
            <person name="Sugano S."/>
        </authorList>
    </citation>
    <scope>NUCLEOTIDE SEQUENCE [LARGE SCALE MRNA] (ISOFORM 7)</scope>
</reference>
<reference key="3">
    <citation type="journal article" date="2005" name="Nature">
        <title>Generation and annotation of the DNA sequences of human chromosomes 2 and 4.</title>
        <authorList>
            <person name="Hillier L.W."/>
            <person name="Graves T.A."/>
            <person name="Fulton R.S."/>
            <person name="Fulton L.A."/>
            <person name="Pepin K.H."/>
            <person name="Minx P."/>
            <person name="Wagner-McPherson C."/>
            <person name="Layman D."/>
            <person name="Wylie K."/>
            <person name="Sekhon M."/>
            <person name="Becker M.C."/>
            <person name="Fewell G.A."/>
            <person name="Delehaunty K.D."/>
            <person name="Miner T.L."/>
            <person name="Nash W.E."/>
            <person name="Kremitzki C."/>
            <person name="Oddy L."/>
            <person name="Du H."/>
            <person name="Sun H."/>
            <person name="Bradshaw-Cordum H."/>
            <person name="Ali J."/>
            <person name="Carter J."/>
            <person name="Cordes M."/>
            <person name="Harris A."/>
            <person name="Isak A."/>
            <person name="van Brunt A."/>
            <person name="Nguyen C."/>
            <person name="Du F."/>
            <person name="Courtney L."/>
            <person name="Kalicki J."/>
            <person name="Ozersky P."/>
            <person name="Abbott S."/>
            <person name="Armstrong J."/>
            <person name="Belter E.A."/>
            <person name="Caruso L."/>
            <person name="Cedroni M."/>
            <person name="Cotton M."/>
            <person name="Davidson T."/>
            <person name="Desai A."/>
            <person name="Elliott G."/>
            <person name="Erb T."/>
            <person name="Fronick C."/>
            <person name="Gaige T."/>
            <person name="Haakenson W."/>
            <person name="Haglund K."/>
            <person name="Holmes A."/>
            <person name="Harkins R."/>
            <person name="Kim K."/>
            <person name="Kruchowski S.S."/>
            <person name="Strong C.M."/>
            <person name="Grewal N."/>
            <person name="Goyea E."/>
            <person name="Hou S."/>
            <person name="Levy A."/>
            <person name="Martinka S."/>
            <person name="Mead K."/>
            <person name="McLellan M.D."/>
            <person name="Meyer R."/>
            <person name="Randall-Maher J."/>
            <person name="Tomlinson C."/>
            <person name="Dauphin-Kohlberg S."/>
            <person name="Kozlowicz-Reilly A."/>
            <person name="Shah N."/>
            <person name="Swearengen-Shahid S."/>
            <person name="Snider J."/>
            <person name="Strong J.T."/>
            <person name="Thompson J."/>
            <person name="Yoakum M."/>
            <person name="Leonard S."/>
            <person name="Pearman C."/>
            <person name="Trani L."/>
            <person name="Radionenko M."/>
            <person name="Waligorski J.E."/>
            <person name="Wang C."/>
            <person name="Rock S.M."/>
            <person name="Tin-Wollam A.-M."/>
            <person name="Maupin R."/>
            <person name="Latreille P."/>
            <person name="Wendl M.C."/>
            <person name="Yang S.-P."/>
            <person name="Pohl C."/>
            <person name="Wallis J.W."/>
            <person name="Spieth J."/>
            <person name="Bieri T.A."/>
            <person name="Berkowicz N."/>
            <person name="Nelson J.O."/>
            <person name="Osborne J."/>
            <person name="Ding L."/>
            <person name="Meyer R."/>
            <person name="Sabo A."/>
            <person name="Shotland Y."/>
            <person name="Sinha P."/>
            <person name="Wohldmann P.E."/>
            <person name="Cook L.L."/>
            <person name="Hickenbotham M.T."/>
            <person name="Eldred J."/>
            <person name="Williams D."/>
            <person name="Jones T.A."/>
            <person name="She X."/>
            <person name="Ciccarelli F.D."/>
            <person name="Izaurralde E."/>
            <person name="Taylor J."/>
            <person name="Schmutz J."/>
            <person name="Myers R.M."/>
            <person name="Cox D.R."/>
            <person name="Huang X."/>
            <person name="McPherson J.D."/>
            <person name="Mardis E.R."/>
            <person name="Clifton S.W."/>
            <person name="Warren W.C."/>
            <person name="Chinwalla A.T."/>
            <person name="Eddy S.R."/>
            <person name="Marra M.A."/>
            <person name="Ovcharenko I."/>
            <person name="Furey T.S."/>
            <person name="Miller W."/>
            <person name="Eichler E.E."/>
            <person name="Bork P."/>
            <person name="Suyama M."/>
            <person name="Torrents D."/>
            <person name="Waterston R.H."/>
            <person name="Wilson R.K."/>
        </authorList>
    </citation>
    <scope>NUCLEOTIDE SEQUENCE [LARGE SCALE GENOMIC DNA]</scope>
</reference>
<reference key="4">
    <citation type="submission" date="2005-07" db="EMBL/GenBank/DDBJ databases">
        <authorList>
            <person name="Mural R.J."/>
            <person name="Istrail S."/>
            <person name="Sutton G.G."/>
            <person name="Florea L."/>
            <person name="Halpern A.L."/>
            <person name="Mobarry C.M."/>
            <person name="Lippert R."/>
            <person name="Walenz B."/>
            <person name="Shatkay H."/>
            <person name="Dew I."/>
            <person name="Miller J.R."/>
            <person name="Flanigan M.J."/>
            <person name="Edwards N.J."/>
            <person name="Bolanos R."/>
            <person name="Fasulo D."/>
            <person name="Halldorsson B.V."/>
            <person name="Hannenhalli S."/>
            <person name="Turner R."/>
            <person name="Yooseph S."/>
            <person name="Lu F."/>
            <person name="Nusskern D.R."/>
            <person name="Shue B.C."/>
            <person name="Zheng X.H."/>
            <person name="Zhong F."/>
            <person name="Delcher A.L."/>
            <person name="Huson D.H."/>
            <person name="Kravitz S.A."/>
            <person name="Mouchard L."/>
            <person name="Reinert K."/>
            <person name="Remington K.A."/>
            <person name="Clark A.G."/>
            <person name="Waterman M.S."/>
            <person name="Eichler E.E."/>
            <person name="Adams M.D."/>
            <person name="Hunkapiller M.W."/>
            <person name="Myers E.W."/>
            <person name="Venter J.C."/>
        </authorList>
    </citation>
    <scope>NUCLEOTIDE SEQUENCE [LARGE SCALE GENOMIC DNA]</scope>
</reference>
<reference key="5">
    <citation type="journal article" date="2004" name="Genome Res.">
        <title>The status, quality, and expansion of the NIH full-length cDNA project: the Mammalian Gene Collection (MGC).</title>
        <authorList>
            <consortium name="The MGC Project Team"/>
        </authorList>
    </citation>
    <scope>NUCLEOTIDE SEQUENCE [LARGE SCALE MRNA] (ISOFORMS PAX3B; 6 AND 7)</scope>
    <source>
        <tissue>Skin</tissue>
    </source>
</reference>
<reference key="6">
    <citation type="journal article" date="1995" name="Genomics">
        <title>Genomic organization of the human PAX3 gene: DNA sequence analysis of the region disrupted in alveolar rhabdomyosarcoma.</title>
        <authorList>
            <person name="Macina R.A."/>
            <person name="Barr F.G."/>
            <person name="Galili N."/>
            <person name="Riethman H.C."/>
        </authorList>
    </citation>
    <scope>NUCLEOTIDE SEQUENCE [GENOMIC DNA] OF 1-29 AND 197-479</scope>
</reference>
<reference key="7">
    <citation type="journal article" date="1989" name="EMBO J.">
        <title>Conservation of the paired domain in metazoans and its structure in three isolated human genes.</title>
        <authorList>
            <person name="Burri M."/>
            <person name="Tromvoukis Y."/>
            <person name="Bopp D."/>
            <person name="Frigerio G."/>
            <person name="Noll M."/>
        </authorList>
    </citation>
    <scope>NUCLEOTIDE SEQUENCE [GENOMIC DNA] OF 30-195</scope>
</reference>
<reference key="8">
    <citation type="journal article" date="1994" name="Hum. Mol. Genet.">
        <title>PAX3 gene structure and mutations: close analogies between Waardenburg syndrome and the Splotch mouse.</title>
        <authorList>
            <person name="Tassabehji M."/>
            <person name="Newton V.E."/>
            <person name="Leverton K."/>
            <person name="Turnbull K."/>
            <person name="Seemanova E."/>
            <person name="Kunze J."/>
            <person name="Sperling K."/>
            <person name="Strachan T."/>
            <person name="Read A.P."/>
        </authorList>
    </citation>
    <scope>NUCLEOTIDE SEQUENCE [GENOMIC DNA] OF 196-392</scope>
    <scope>VARIANTS WS1 LEU-45 AND ASP-99</scope>
</reference>
<reference key="9">
    <citation type="journal article" date="1994" name="Hum. Genet.">
        <title>Isolation of two isoforms of the PAX3 gene transcripts and their tissue-specific alternative expression in human adult tissues.</title>
        <authorList>
            <person name="Tsukamoto K."/>
            <person name="Nakamura Y."/>
            <person name="Niikawa N."/>
        </authorList>
    </citation>
    <scope>NUCLEOTIDE SEQUENCE [MRNA] (ISOFORMS PAX3A AND PAX3B)</scope>
</reference>
<reference key="10">
    <citation type="journal article" date="2004" name="Cancer Res.">
        <title>Gene expression signatures identify rhabdomyosarcoma subtypes and detect a novel t(2;2)(q35;p23) translocation fusing PAX3 to NCOA1.</title>
        <authorList>
            <person name="Wachtel M."/>
            <person name="Dettling M."/>
            <person name="Koscielniak E."/>
            <person name="Stegmaier S."/>
            <person name="Treuner J."/>
            <person name="Simon-Klingenstein K."/>
            <person name="Buehlmann P."/>
            <person name="Niggli F.K."/>
            <person name="Schaefer B.W."/>
        </authorList>
    </citation>
    <scope>NUCLEOTIDE SEQUENCE OF 1-319 (ISOFORM 6/7)</scope>
    <scope>CHROMOSOMAL TRANSLOCATION WITH NCOA1</scope>
</reference>
<reference key="11">
    <citation type="journal article" date="1992" name="Nature">
        <title>Waardenburg's syndrome patients have mutations in the human homologue of the Pax-3 paired box gene.</title>
        <authorList>
            <person name="Tassabehji M."/>
            <person name="Read A.P."/>
            <person name="Newton V.E."/>
            <person name="Harris R."/>
            <person name="Balling R."/>
            <person name="Gruss P."/>
            <person name="Strachan T."/>
        </authorList>
    </citation>
    <scope>NUCLEOTIDE SEQUENCE [GENOMIC DNA] OF 56-74</scope>
    <scope>VARIANT WS1 63-ALA--ILE-67 DEL</scope>
</reference>
<reference key="12">
    <citation type="submission" date="1996-03" db="EMBL/GenBank/DDBJ databases">
        <authorList>
            <person name="Lalwani A.K."/>
            <person name="Ploplis B."/>
            <person name="Fex J."/>
            <person name="Grundfast K.M."/>
            <person name="San Agustin T.B."/>
            <person name="Wilcox E.R."/>
        </authorList>
    </citation>
    <scope>NUCLEOTIDE SEQUENCE OF 265-319</scope>
</reference>
<reference key="13">
    <citation type="journal article" date="1993" name="Nat. Genet.">
        <title>Fusion of a fork head domain gene to PAX3 in the solid tumour alveolar rhabdomyosarcoma.</title>
        <authorList>
            <person name="Galili N."/>
            <person name="Davis R.J."/>
            <person name="Fredericks W.J."/>
            <person name="Mukhopadhyay S."/>
            <person name="Rauscher F.J. III"/>
            <person name="Emanuel B.S."/>
            <person name="Rovera G."/>
            <person name="Barr F.G."/>
        </authorList>
    </citation>
    <scope>INVOLVEMENT IN RMS2</scope>
    <scope>CHROMOSOMAL TRANSLOCATION WITH FOXO1</scope>
</reference>
<reference key="14">
    <citation type="journal article" date="1999" name="EMBO J.">
        <title>The Pax3-FKHR oncoprotein is unresponsive to the Pax3-associated repressor hDaxx.</title>
        <authorList>
            <person name="Hollenbach A.D."/>
            <person name="Sublett J.E."/>
            <person name="McPherson C.J."/>
            <person name="Grosveld G."/>
        </authorList>
    </citation>
    <scope>INTERACTION WITH DAXX</scope>
</reference>
<reference key="15">
    <citation type="journal article" date="1992" name="Hum. Mol. Genet.">
        <title>A frameshift mutation in the HuP2 paired domain of the probable human homolog of murine Pax-3 is responsible for Waardenburg syndrome type 1 in an Indonesian family.</title>
        <authorList>
            <person name="Morell R."/>
            <person name="Friedman T.B."/>
            <person name="Moeljopawiro S."/>
            <person name="Hartono S."/>
            <person name="Asher J.H. Jr."/>
        </authorList>
    </citation>
    <scope>INVOLVEMENT IN WS1</scope>
</reference>
<reference key="16">
    <citation type="journal article" date="2006" name="Cancer Res.">
        <title>Functional analysis of alternative isoforms of the transcription factor PAX3 in melanocytes in vitro.</title>
        <authorList>
            <person name="Wang Q."/>
            <person name="Kumar S."/>
            <person name="Slevin M."/>
            <person name="Kumar P."/>
        </authorList>
    </citation>
    <scope>ALTERNATIVE SPLICING</scope>
    <scope>FUNCTION</scope>
</reference>
<reference key="17">
    <citation type="journal article" date="2011" name="Int. J. Biochem. Cell Biol.">
        <title>Identification of serines 201 and 209 as sites of Pax3 phosphorylation and the altered phosphorylation status of Pax3-FOXO1 during early myogenic differentiation.</title>
        <authorList>
            <person name="Dietz K.N."/>
            <person name="Miller P.J."/>
            <person name="Iyengar A.S."/>
            <person name="Loupe J.M."/>
            <person name="Hollenbach A.D."/>
        </authorList>
    </citation>
    <scope>PHOSPHORYLATION AT SER-201; SER-205 AND SER-209</scope>
</reference>
<reference key="18">
    <citation type="journal article" date="2012" name="Hum. Genet.">
        <title>Functional analysis of Waardenburg syndrome-associated PAX3 and SOX10 mutations: report of a dominant-negative SOX10 mutation in Waardenburg syndrome type II.</title>
        <authorList>
            <person name="Zhang H."/>
            <person name="Chen H."/>
            <person name="Luo H."/>
            <person name="An J."/>
            <person name="Sun L."/>
            <person name="Mei L."/>
            <person name="He C."/>
            <person name="Jiang L."/>
            <person name="Jiang W."/>
            <person name="Xia K."/>
            <person name="Li J.D."/>
            <person name="Feng Y."/>
        </authorList>
    </citation>
    <scope>FUNCTION</scope>
    <scope>SUBCELLULAR LOCATION</scope>
    <scope>INTERACTION WITH SOX10</scope>
    <scope>CHARACTERIZATION OF VARIANT WS1 ASP-80</scope>
</reference>
<reference key="19">
    <citation type="journal article" date="2009" name="Biochemistry">
        <title>Structural basis for DNA recognition by the human PAX3 homeodomain.</title>
        <authorList>
            <person name="Birrane G."/>
            <person name="Soni A."/>
            <person name="Ladias J.A."/>
        </authorList>
    </citation>
    <scope>X-RAY CRYSTALLOGRAPHY (1.95 ANGSTROMS) OF 219-278 IN COMPLEX WITH DNA</scope>
    <scope>SUBUNIT</scope>
</reference>
<reference key="20">
    <citation type="journal article" date="1992" name="Nature">
        <title>An exonic mutation in the HuP2 paired domain gene causes Waardenburg's syndrome.</title>
        <authorList>
            <person name="Baldwin C.T."/>
            <person name="Hoth C.F."/>
            <person name="Amos J.A."/>
            <person name="Da-Silva E.O."/>
            <person name="Milunsky A."/>
        </authorList>
    </citation>
    <scope>VARIANT WS1 LEU-50</scope>
</reference>
<reference key="21">
    <citation type="journal article" date="1993" name="Nat. Genet.">
        <title>Mutations in the PAX3 gene causing Waardenburg syndrome type 1 and type 2.</title>
        <authorList>
            <person name="Tassabehji M."/>
            <person name="Read A.P."/>
            <person name="Newton V.E."/>
            <person name="Patton M."/>
            <person name="Gruss P."/>
            <person name="Harris R."/>
            <person name="Strachan T."/>
        </authorList>
    </citation>
    <scope>VARIANT WS1 ALA-81</scope>
</reference>
<reference key="22">
    <citation type="journal article" date="1993" name="Am. J. Hum. Genet.">
        <title>Mutations in the paired domain of the human PAX3 gene cause Klein-Waardenburg syndrome (WS-III) as well as Waardenburg syndrome type I (WS-I).</title>
        <authorList>
            <person name="Hoth C.F."/>
            <person name="Milunsky A."/>
            <person name="Lipsky N."/>
            <person name="Sheffer R."/>
            <person name="Clarren S.K."/>
            <person name="Baldwin C.T."/>
        </authorList>
    </citation>
    <scope>VARIANT WS3 HIS-47</scope>
    <scope>VARIANT WS1 LEU-56</scope>
</reference>
<reference key="23">
    <citation type="journal article" date="1994" name="Hum. Mutat.">
        <title>A single base pair substitution within the paired box of PAX3 in an individual with Waardenburg syndrome type 1 (WS1).</title>
        <authorList>
            <person name="Pierpont J.W."/>
            <person name="Doolan L.D."/>
            <person name="Amann K."/>
            <person name="Snead G.R."/>
            <person name="Erickson R.P."/>
        </authorList>
    </citation>
    <scope>VARIANT WS1 VAL-62</scope>
</reference>
<reference key="24">
    <citation type="journal article" date="1995" name="Am. J. Hum. Genet.">
        <title>Further elucidation of the genomic structure of PAX3, and identification of two different point mutations within the PAX3 homeobox that cause Waardenburg syndrome type 1 in two families.</title>
        <authorList>
            <person name="Lalwani A.K."/>
            <person name="Brister J.R."/>
            <person name="Fex J."/>
            <person name="Grundfast K.M."/>
            <person name="Ploplis B."/>
            <person name="San Agustin T.B."/>
            <person name="Wilcox E.R."/>
        </authorList>
    </citation>
    <scope>VARIANTS WS1 PHE-265 AND GLY-271</scope>
</reference>
<reference key="25">
    <citation type="journal article" date="1995" name="Am. J. Hum. Genet.">
        <title>Homozygosity for Waardenburg syndrome.</title>
        <authorList>
            <person name="Zlotogora J."/>
            <person name="Lerer I."/>
            <person name="Bar-David S."/>
            <person name="Ergaz Z."/>
            <person name="Abeliovich D."/>
        </authorList>
    </citation>
    <scope>VARIANT WS3 PHE-84</scope>
</reference>
<reference key="26">
    <citation type="journal article" date="1995" name="Am. J. Med. Genet.">
        <title>Mutations in PAX3 that cause Waardenburg syndrome type I: ten new mutations and review of the literature.</title>
        <authorList>
            <person name="Baldwin C.T."/>
            <person name="Hoth C.F."/>
            <person name="Macina R.A."/>
            <person name="Milunsky A."/>
        </authorList>
    </citation>
    <scope>VARIANTS WS1 MET-60; GLU-85 AND SER-238</scope>
</reference>
<reference key="27">
    <citation type="journal article" date="1995" name="Hum. Mol. Genet.">
        <title>The mutational spectrum in Waardenburg syndrome.</title>
        <authorList>
            <person name="Tassabehji M."/>
            <person name="Newton V.E."/>
            <person name="Liu X.-Z."/>
            <person name="Brady A."/>
            <person name="Donnai D."/>
            <person name="Krajewska-Walasek M."/>
            <person name="Murday V."/>
            <person name="Norman A."/>
            <person name="Obersztyn E."/>
            <person name="Reardon W."/>
            <person name="Rice J.C."/>
            <person name="Trembath R."/>
            <person name="Wieacker P."/>
            <person name="Whiteford M."/>
            <person name="Winter R."/>
            <person name="Read A.P."/>
        </authorList>
    </citation>
    <scope>VARIANTS WS1 MET-78; ALA-81; ASP-99; CYS-266; CYS-270; CYS-271 AND HIS-271</scope>
    <scope>VARIANT LYS-315</scope>
</reference>
<reference key="28">
    <citation type="journal article" date="1996" name="Hum. Mol. Genet.">
        <title>Phenotypic variation in Waardenburg syndrome: mutational heterogeneity, modifier genes or polygenic background?</title>
        <authorList>
            <person name="Pandya A."/>
            <person name="Xia X.-J."/>
            <person name="Landa B.L."/>
            <person name="Arnos K.S."/>
            <person name="Israel J."/>
            <person name="Lloyd J."/>
            <person name="James A.L."/>
            <person name="Diehl S.R."/>
            <person name="Blanton S.H."/>
            <person name="Nance W.E."/>
        </authorList>
    </citation>
    <scope>VARIANTS WS1 ARG-48; 223-ARG--PHE-479 DEL; CYS-270; HIS-271 AND LYS-273</scope>
    <scope>VARIANT LYS-315</scope>
</reference>
<reference key="29">
    <citation type="journal article" date="1996" name="Hum. Mutat.">
        <title>Missense mutation in the paired domain of PAX3 causes craniofacial-deafness-hand syndrome.</title>
        <authorList>
            <person name="Asher J.H. Jr."/>
            <person name="Sommer A."/>
            <person name="Morell R."/>
            <person name="Friedman T.B."/>
        </authorList>
    </citation>
    <scope>VARIANT CDHS LYS-47</scope>
</reference>
<reference key="30">
    <citation type="journal article" date="1996" name="J. Med. Genet.">
        <title>PAX genes and human neural tube defects: an amino acid substitution in PAX1 in a patient with spina bifida.</title>
        <authorList>
            <person name="Hol F.A."/>
            <person name="Geurds M.P.A."/>
            <person name="Chatkupt S."/>
            <person name="Shugart Y.Y."/>
            <person name="Balling R."/>
            <person name="Schrander-Stumpel C.T.R.M."/>
            <person name="Johnson W.G."/>
            <person name="Hamel B.C.J."/>
            <person name="Mariman E.C.M."/>
        </authorList>
    </citation>
    <scope>VARIANT LYS-315</scope>
</reference>
<reference key="31">
    <citation type="journal article" date="1997" name="Hum. Mutat.">
        <title>Three novel PAX3 mutations observed in patients with Waardenburg syndrome type 1.</title>
        <authorList>
            <person name="Soejima H."/>
            <person name="Fujimoto M."/>
            <person name="Tsukamoto K."/>
            <person name="Matsumoto N."/>
            <person name="Yoshiura K."/>
            <person name="Fukushima Y."/>
            <person name="Jinno Y."/>
            <person name="Niikawa N."/>
        </authorList>
    </citation>
    <scope>VARIANT WS1 PHE-59</scope>
</reference>
<reference key="32">
    <citation type="journal article" date="1998" name="Hum. Mutat. Suppl.">
        <title>Identification of two PAX3 mutations causing Waardenburg syndrome, one within the paired domain (M62V) and the other downstream of the homeodomain (Q282X).</title>
        <authorList>
            <person name="Hol F.A."/>
            <person name="Geurds M.P.A."/>
            <person name="Cremers C.W.R.J."/>
            <person name="Hamel B.C.J."/>
            <person name="Mariman E.C.M."/>
        </authorList>
    </citation>
    <scope>VARIANT WS1 VAL-62</scope>
</reference>
<reference key="33">
    <citation type="journal article" date="1998" name="J. Med. Genet.">
        <title>Septo-optic dysplasia and WS1 in the proband of a WS1 family segregating for a novel mutation in PAX3 exon 7.</title>
        <authorList>
            <person name="Carey M.L."/>
            <person name="Friedman T.B."/>
            <person name="Asher J.H. Jr."/>
            <person name="Innis J.W."/>
        </authorList>
    </citation>
    <scope>VARIANT WS1 HIS-391</scope>
</reference>
<reference key="34">
    <citation type="journal article" date="1998" name="Mol. Cell. Probes">
        <title>A PAX3 polymorphism (T315K) in a family exhibiting Waardenburg syndrome type 2.</title>
        <authorList>
            <person name="Wang C."/>
            <person name="Kim E."/>
            <person name="Attaie A."/>
            <person name="Smith T.N."/>
            <person name="Wilcox E.R."/>
            <person name="Lalwani A.K."/>
        </authorList>
    </citation>
    <scope>VARIANT LYS-315</scope>
</reference>
<reference key="35">
    <citation type="journal article" date="1999" name="Hum. Mutat.">
        <title>A novel missense mutation Ile59Asn in the PAX3 gene in a family with Waardenburg syndrome type I.</title>
        <authorList>
            <person name="Markova T.G."/>
            <person name="Shevtsov S.P."/>
            <person name="Moskolenko L.N."/>
            <person name="Lantsov A.A."/>
            <person name="Schwartz E.I."/>
        </authorList>
    </citation>
    <scope>VARIANT WS1 ASN-59</scope>
</reference>
<reference key="36">
    <citation type="submission" date="1999-05" db="UniProtKB">
        <authorList>
            <person name="Bottani A."/>
            <person name="Antonarakis S.E."/>
            <person name="Blouin J.-L."/>
        </authorList>
    </citation>
    <scope>VARIANT WS3 CYS-270</scope>
</reference>
<reference key="37">
    <citation type="journal article" date="2000" name="Ophthalmic Genet.">
        <title>Identification of a novel mutation in the paired domain of PAX3 in an Iranian family with Waardenburg syndrome type I.</title>
        <authorList>
            <person name="Sotirova V.N."/>
            <person name="Rezaie T.M."/>
            <person name="Khoshsorour M.M."/>
            <person name="Sarfarazi M."/>
        </authorList>
    </citation>
    <scope>VARIANT WS1 LEU-73</scope>
</reference>
<reference key="38">
    <citation type="journal article" date="2003" name="Am. J. Med. Genet. A">
        <title>Homozygous and heterozygous inheritance of PAX3 mutations causes different types of Waardenburg syndrome.</title>
        <authorList>
            <person name="Wollnik B."/>
            <person name="Tukel T."/>
            <person name="Uyguner O."/>
            <person name="Ghanbari A."/>
            <person name="Kayserili H."/>
            <person name="Emiroglu M."/>
            <person name="Yuksel-Apak M."/>
        </authorList>
    </citation>
    <scope>VARIANT WS1 MET-60</scope>
    <scope>VARIANT WS3 HIS-90</scope>
</reference>
<reference key="39">
    <citation type="journal article" date="2006" name="Mol. Vis.">
        <title>A novel mutation of PAX3 in a Chinese family with Waardenburg syndrome.</title>
        <authorList>
            <person name="Qin W."/>
            <person name="Shu A."/>
            <person name="Qian X."/>
            <person name="Gao J."/>
            <person name="Xing Q."/>
            <person name="Zhang J."/>
            <person name="Zheng Y."/>
            <person name="Li X."/>
            <person name="Li S."/>
            <person name="Feng G."/>
            <person name="He L."/>
        </authorList>
    </citation>
    <scope>VARIANT WS1 PRO-234</scope>
</reference>
<reference key="40">
    <citation type="journal article" date="2010" name="Biochem. Biophys. Res. Commun.">
        <title>Novel mutations of PAX3, MITF, and SOX10 genes in Chinese patients with type I or type II Waardenburg syndrome.</title>
        <authorList>
            <person name="Chen H."/>
            <person name="Jiang L."/>
            <person name="Xie Z."/>
            <person name="Mei L."/>
            <person name="He C."/>
            <person name="Hu Z."/>
            <person name="Xia K."/>
            <person name="Feng Y."/>
        </authorList>
    </citation>
    <scope>VARIANTS WS1 ASP-80; 223-ARG--PHE-479 DEL; PRO-234 AND HIS-271</scope>
</reference>
<accession>P23760</accession>
<accession>G5E9C1</accession>
<accession>Q16448</accession>
<accession>Q494Z3</accession>
<accession>Q494Z4</accession>
<accession>Q53T90</accession>
<accession>Q6GSJ9</accession>
<accession>Q86UQ2</accession>
<accession>Q86UQ3</accession>